<evidence type="ECO:0000255" key="1">
    <source>
        <dbReference type="HAMAP-Rule" id="MF_01179"/>
    </source>
</evidence>
<sequence length="169" mass="19013">MYTSGYANRSSSFPTTTHNAARTATENAAAGLVSEVVYHEDQPMMAQLLLLPLLRQLGQQSRWQLWLTPQQKLSREWVQSSGLPLTKVMQISQLAPRHTLESMIRALRTGNYSVVIGWMTEELTEEEHASLVEAAKVGNAVGFIMRPVRAHALPRRQHSGLKIHSNLYH</sequence>
<proteinExistence type="inferred from homology"/>
<gene>
    <name evidence="1" type="primary">sulA</name>
    <name type="ordered locus">SeAg_B1029</name>
</gene>
<reference key="1">
    <citation type="journal article" date="2011" name="J. Bacteriol.">
        <title>Comparative genomics of 28 Salmonella enterica isolates: evidence for CRISPR-mediated adaptive sublineage evolution.</title>
        <authorList>
            <person name="Fricke W.F."/>
            <person name="Mammel M.K."/>
            <person name="McDermott P.F."/>
            <person name="Tartera C."/>
            <person name="White D.G."/>
            <person name="Leclerc J.E."/>
            <person name="Ravel J."/>
            <person name="Cebula T.A."/>
        </authorList>
    </citation>
    <scope>NUCLEOTIDE SEQUENCE [LARGE SCALE GENOMIC DNA]</scope>
    <source>
        <strain>SL483</strain>
    </source>
</reference>
<keyword id="KW-0131">Cell cycle</keyword>
<keyword id="KW-0132">Cell division</keyword>
<keyword id="KW-0227">DNA damage</keyword>
<keyword id="KW-0717">Septation</keyword>
<keyword id="KW-0742">SOS response</keyword>
<accession>B5F1V5</accession>
<protein>
    <recommendedName>
        <fullName evidence="1">Cell division inhibitor SulA</fullName>
    </recommendedName>
</protein>
<comment type="function">
    <text evidence="1">Component of the SOS system and an inhibitor of cell division. Accumulation of SulA causes rapid cessation of cell division and the appearance of long, non-septate filaments. In the presence of GTP, binds a polymerization-competent form of FtsZ in a 1:1 ratio, thus inhibiting FtsZ polymerization and therefore preventing it from participating in the assembly of the Z ring. This mechanism prevents the premature segregation of damaged DNA to daughter cells during cell division.</text>
</comment>
<comment type="subunit">
    <text evidence="1">Interacts with FtsZ.</text>
</comment>
<comment type="induction">
    <text evidence="1">By DNA damage, as part of the SOS response.</text>
</comment>
<comment type="PTM">
    <text evidence="1">Is rapidly cleaved and degraded by the Lon protease once DNA damage is repaired.</text>
</comment>
<comment type="similarity">
    <text evidence="1">Belongs to the SulA family.</text>
</comment>
<feature type="chain" id="PRO_1000138164" description="Cell division inhibitor SulA">
    <location>
        <begin position="1"/>
        <end position="169"/>
    </location>
</feature>
<feature type="region of interest" description="FtsZ binding" evidence="1">
    <location>
        <begin position="106"/>
        <end position="112"/>
    </location>
</feature>
<feature type="region of interest" description="Lon protease binding" evidence="1">
    <location>
        <begin position="162"/>
        <end position="169"/>
    </location>
</feature>
<feature type="site" description="Essential for degradation by Lon protease" evidence="1">
    <location>
        <position position="169"/>
    </location>
</feature>
<name>SULA_SALA4</name>
<organism>
    <name type="scientific">Salmonella agona (strain SL483)</name>
    <dbReference type="NCBI Taxonomy" id="454166"/>
    <lineage>
        <taxon>Bacteria</taxon>
        <taxon>Pseudomonadati</taxon>
        <taxon>Pseudomonadota</taxon>
        <taxon>Gammaproteobacteria</taxon>
        <taxon>Enterobacterales</taxon>
        <taxon>Enterobacteriaceae</taxon>
        <taxon>Salmonella</taxon>
    </lineage>
</organism>
<dbReference type="EMBL" id="CP001138">
    <property type="protein sequence ID" value="ACH51962.1"/>
    <property type="molecule type" value="Genomic_DNA"/>
</dbReference>
<dbReference type="RefSeq" id="WP_000288732.1">
    <property type="nucleotide sequence ID" value="NC_011149.1"/>
</dbReference>
<dbReference type="SMR" id="B5F1V5"/>
<dbReference type="KEGG" id="sea:SeAg_B1029"/>
<dbReference type="HOGENOM" id="CLU_118972_1_0_6"/>
<dbReference type="Proteomes" id="UP000008819">
    <property type="component" value="Chromosome"/>
</dbReference>
<dbReference type="GO" id="GO:0000917">
    <property type="term" value="P:division septum assembly"/>
    <property type="evidence" value="ECO:0007669"/>
    <property type="project" value="UniProtKB-KW"/>
</dbReference>
<dbReference type="GO" id="GO:0006281">
    <property type="term" value="P:DNA repair"/>
    <property type="evidence" value="ECO:0007669"/>
    <property type="project" value="TreeGrafter"/>
</dbReference>
<dbReference type="GO" id="GO:0051782">
    <property type="term" value="P:negative regulation of cell division"/>
    <property type="evidence" value="ECO:0007669"/>
    <property type="project" value="UniProtKB-UniRule"/>
</dbReference>
<dbReference type="GO" id="GO:0009432">
    <property type="term" value="P:SOS response"/>
    <property type="evidence" value="ECO:0007669"/>
    <property type="project" value="UniProtKB-UniRule"/>
</dbReference>
<dbReference type="FunFam" id="3.40.50.300:FF:000417">
    <property type="entry name" value="Cell division inhibitor SulA"/>
    <property type="match status" value="1"/>
</dbReference>
<dbReference type="Gene3D" id="3.40.50.300">
    <property type="entry name" value="P-loop containing nucleotide triphosphate hydrolases"/>
    <property type="match status" value="1"/>
</dbReference>
<dbReference type="HAMAP" id="MF_01179">
    <property type="entry name" value="SulA"/>
    <property type="match status" value="1"/>
</dbReference>
<dbReference type="InterPro" id="IPR004596">
    <property type="entry name" value="Cell_div_suppressor_SulA"/>
</dbReference>
<dbReference type="InterPro" id="IPR027417">
    <property type="entry name" value="P-loop_NTPase"/>
</dbReference>
<dbReference type="InterPro" id="IPR050356">
    <property type="entry name" value="SulA_CellDiv_inhibitor"/>
</dbReference>
<dbReference type="InterPro" id="IPR047696">
    <property type="entry name" value="SulA_enterobact"/>
</dbReference>
<dbReference type="NCBIfam" id="NF007892">
    <property type="entry name" value="PRK10595.1"/>
    <property type="match status" value="1"/>
</dbReference>
<dbReference type="NCBIfam" id="TIGR00623">
    <property type="entry name" value="SOS_SulA_coli"/>
    <property type="match status" value="1"/>
</dbReference>
<dbReference type="PANTHER" id="PTHR35369">
    <property type="entry name" value="BLR3025 PROTEIN-RELATED"/>
    <property type="match status" value="1"/>
</dbReference>
<dbReference type="PANTHER" id="PTHR35369:SF4">
    <property type="entry name" value="CELL DIVISION INHIBITOR SULA"/>
    <property type="match status" value="1"/>
</dbReference>
<dbReference type="Pfam" id="PF03846">
    <property type="entry name" value="SulA"/>
    <property type="match status" value="1"/>
</dbReference>
<dbReference type="PIRSF" id="PIRSF003093">
    <property type="entry name" value="SulA"/>
    <property type="match status" value="1"/>
</dbReference>
<dbReference type="SUPFAM" id="SSF52540">
    <property type="entry name" value="P-loop containing nucleoside triphosphate hydrolases"/>
    <property type="match status" value="1"/>
</dbReference>